<accession>P18384</accession>
<accession>Q76ZX8</accession>
<proteinExistence type="evidence at protein level"/>
<keyword id="KW-1032">Host cell membrane</keyword>
<keyword id="KW-1043">Host membrane</keyword>
<keyword id="KW-0472">Membrane</keyword>
<keyword id="KW-0646">Protease inhibitor</keyword>
<keyword id="KW-1185">Reference proteome</keyword>
<keyword id="KW-0722">Serine protease inhibitor</keyword>
<keyword id="KW-0732">Signal</keyword>
<keyword id="KW-0946">Virion</keyword>
<comment type="function">
    <text evidence="4">Negatively regulates superinfection and syncytium formation in infected host cells. Acts in concert with OPG185/A56 protein at the host cell membrane by interacting with and inhibiting the mature virion entry/fusion complex (EFC). This mechanism ensures that new virions released from the cell cannot enter already infected cells.</text>
</comment>
<comment type="subunit">
    <text evidence="2">Interacts with OPG185/A56 protein.</text>
</comment>
<comment type="subcellular location">
    <subcellularLocation>
        <location evidence="6">Virion membrane</location>
        <topology evidence="6">Peripheral membrane protein</topology>
    </subcellularLocation>
    <subcellularLocation>
        <location evidence="6">Host cell membrane</location>
        <topology evidence="6">Peripheral membrane protein</topology>
        <orientation evidence="6">Extracellular side</orientation>
    </subcellularLocation>
    <text>Component of extracellular enveloped virus (EEV) but not intracellular mature virus (IMV). Anchored to the surface of the outermost membrane of EEV via its interaction with A56 protein.</text>
</comment>
<comment type="induction">
    <text evidence="3">Expressed in the intermediate phase of the viral replicative cycle.</text>
</comment>
<comment type="similarity">
    <text evidence="5">Belongs to the serpin family. Orthopoxvirus OPG040 subfamily.</text>
</comment>
<evidence type="ECO:0000255" key="1"/>
<evidence type="ECO:0000269" key="2">
    <source>
    </source>
</evidence>
<evidence type="ECO:0000269" key="3">
    <source>
    </source>
</evidence>
<evidence type="ECO:0000269" key="4">
    <source>
    </source>
</evidence>
<evidence type="ECO:0000305" key="5"/>
<evidence type="ECO:0000305" key="6">
    <source>
    </source>
</evidence>
<dbReference type="EMBL" id="D00382">
    <property type="protein sequence ID" value="BAA00287.1"/>
    <property type="molecule type" value="Genomic_DNA"/>
</dbReference>
<dbReference type="EMBL" id="AH003131">
    <property type="protein sequence ID" value="AAA69632.1"/>
    <property type="molecule type" value="Genomic_DNA"/>
</dbReference>
<dbReference type="EMBL" id="AY243312">
    <property type="protein sequence ID" value="AAO89312.1"/>
    <property type="molecule type" value="Genomic_DNA"/>
</dbReference>
<dbReference type="PIR" id="JS0211">
    <property type="entry name" value="WMVZS3"/>
</dbReference>
<dbReference type="RefSeq" id="YP_232915.1">
    <property type="nucleotide sequence ID" value="NC_006998.1"/>
</dbReference>
<dbReference type="SMR" id="P18384"/>
<dbReference type="IntAct" id="P18384">
    <property type="interactions" value="1"/>
</dbReference>
<dbReference type="MINT" id="P18384"/>
<dbReference type="MEROPS" id="I04.047"/>
<dbReference type="DNASU" id="3707648"/>
<dbReference type="GeneID" id="3707648"/>
<dbReference type="KEGG" id="vg:3707648"/>
<dbReference type="Proteomes" id="UP000000344">
    <property type="component" value="Genome"/>
</dbReference>
<dbReference type="GO" id="GO:0005615">
    <property type="term" value="C:extracellular space"/>
    <property type="evidence" value="ECO:0007669"/>
    <property type="project" value="InterPro"/>
</dbReference>
<dbReference type="GO" id="GO:0020002">
    <property type="term" value="C:host cell plasma membrane"/>
    <property type="evidence" value="ECO:0007669"/>
    <property type="project" value="UniProtKB-SubCell"/>
</dbReference>
<dbReference type="GO" id="GO:0016020">
    <property type="term" value="C:membrane"/>
    <property type="evidence" value="ECO:0007669"/>
    <property type="project" value="UniProtKB-KW"/>
</dbReference>
<dbReference type="GO" id="GO:0055036">
    <property type="term" value="C:virion membrane"/>
    <property type="evidence" value="ECO:0007669"/>
    <property type="project" value="UniProtKB-SubCell"/>
</dbReference>
<dbReference type="GO" id="GO:0004867">
    <property type="term" value="F:serine-type endopeptidase inhibitor activity"/>
    <property type="evidence" value="ECO:0007669"/>
    <property type="project" value="UniProtKB-KW"/>
</dbReference>
<dbReference type="CDD" id="cd19584">
    <property type="entry name" value="serpinO_SPI-3_virus"/>
    <property type="match status" value="1"/>
</dbReference>
<dbReference type="FunFam" id="2.10.310.10:FF:000001">
    <property type="entry name" value="Serpin family A member 1"/>
    <property type="match status" value="1"/>
</dbReference>
<dbReference type="Gene3D" id="2.30.39.10">
    <property type="entry name" value="Alpha-1-antitrypsin, domain 1"/>
    <property type="match status" value="1"/>
</dbReference>
<dbReference type="Gene3D" id="3.30.497.10">
    <property type="entry name" value="Antithrombin, subunit I, domain 2"/>
    <property type="match status" value="1"/>
</dbReference>
<dbReference type="InterPro" id="IPR023796">
    <property type="entry name" value="Serpin_dom"/>
</dbReference>
<dbReference type="InterPro" id="IPR000215">
    <property type="entry name" value="Serpin_fam"/>
</dbReference>
<dbReference type="InterPro" id="IPR036186">
    <property type="entry name" value="Serpin_sf"/>
</dbReference>
<dbReference type="InterPro" id="IPR042178">
    <property type="entry name" value="Serpin_sf_1"/>
</dbReference>
<dbReference type="InterPro" id="IPR042185">
    <property type="entry name" value="Serpin_sf_2"/>
</dbReference>
<dbReference type="PANTHER" id="PTHR11461:SF211">
    <property type="entry name" value="GH10112P-RELATED"/>
    <property type="match status" value="1"/>
</dbReference>
<dbReference type="PANTHER" id="PTHR11461">
    <property type="entry name" value="SERINE PROTEASE INHIBITOR, SERPIN"/>
    <property type="match status" value="1"/>
</dbReference>
<dbReference type="Pfam" id="PF00079">
    <property type="entry name" value="Serpin"/>
    <property type="match status" value="1"/>
</dbReference>
<dbReference type="SMART" id="SM00093">
    <property type="entry name" value="SERPIN"/>
    <property type="match status" value="1"/>
</dbReference>
<dbReference type="SUPFAM" id="SSF56574">
    <property type="entry name" value="Serpins"/>
    <property type="match status" value="1"/>
</dbReference>
<organism>
    <name type="scientific">Vaccinia virus (strain Western Reserve)</name>
    <name type="common">VACV</name>
    <name type="synonym">Vaccinia virus (strain WR)</name>
    <dbReference type="NCBI Taxonomy" id="10254"/>
    <lineage>
        <taxon>Viruses</taxon>
        <taxon>Varidnaviria</taxon>
        <taxon>Bamfordvirae</taxon>
        <taxon>Nucleocytoviricota</taxon>
        <taxon>Pokkesviricetes</taxon>
        <taxon>Chitovirales</taxon>
        <taxon>Poxviridae</taxon>
        <taxon>Chordopoxvirinae</taxon>
        <taxon>Orthopoxvirus</taxon>
        <taxon>Vaccinia virus</taxon>
    </lineage>
</organism>
<gene>
    <name type="primary">OPG040</name>
    <name type="synonym">K2L</name>
    <name type="synonym">SPI-3</name>
    <name type="ORF">VACWR033</name>
</gene>
<feature type="signal peptide" evidence="1">
    <location>
        <begin position="1"/>
        <end position="15"/>
    </location>
</feature>
<feature type="chain" id="PRO_0000094152" description="Superinfection exclusion protein">
    <location>
        <begin position="16"/>
        <end position="369"/>
    </location>
</feature>
<protein>
    <recommendedName>
        <fullName>Superinfection exclusion protein</fullName>
    </recommendedName>
    <alternativeName>
        <fullName>Protein K2</fullName>
    </alternativeName>
    <alternativeName>
        <fullName>Serine proteinase inhibitor 3</fullName>
    </alternativeName>
</protein>
<name>PG040_VACCW</name>
<organismHost>
    <name type="scientific">Bos taurus</name>
    <name type="common">Bovine</name>
    <dbReference type="NCBI Taxonomy" id="9913"/>
</organismHost>
<reference key="1">
    <citation type="journal article" date="1988" name="J. Gen. Virol.">
        <title>Non-essential genes in the vaccinia virus HindIII K fragment: a gene related to serine protease inhibitors and a gene related to the 37K vaccinia virus major envelope antigen.</title>
        <authorList>
            <person name="Boursnell M.E.G."/>
            <person name="Foulds I.J."/>
            <person name="Campbell J.I."/>
            <person name="Binns M.M."/>
        </authorList>
    </citation>
    <scope>NUCLEOTIDE SEQUENCE [GENOMIC DNA]</scope>
</reference>
<reference key="2">
    <citation type="journal article" date="1989" name="Arch. Virol.">
        <title>Partial deletion of the human host range gene in the attenuated vaccinia virus MVA.</title>
        <authorList>
            <person name="Altenburger W."/>
            <person name="Suter C.P."/>
            <person name="Altenburger J."/>
        </authorList>
    </citation>
    <scope>NUCLEOTIDE SEQUENCE [GENOMIC DNA]</scope>
</reference>
<reference key="3">
    <citation type="submission" date="2003-02" db="EMBL/GenBank/DDBJ databases">
        <title>Sequencing of the coding region of Vaccinia-WR to an average 9-fold redundancy and an error rate of 0.16/10kb.</title>
        <authorList>
            <person name="Esposito J.J."/>
            <person name="Frace A.M."/>
            <person name="Sammons S.A."/>
            <person name="Olsen-Rasmussen M."/>
            <person name="Osborne J."/>
            <person name="Wohlhueter R."/>
        </authorList>
    </citation>
    <scope>NUCLEOTIDE SEQUENCE [LARGE SCALE GENOMIC DNA]</scope>
</reference>
<reference key="4">
    <citation type="journal article" date="2011" name="J. Gen. Virol.">
        <title>The vaccinia virus A56 protein: a multifunctional transmembrane glycoprotein that anchors two secreted viral proteins.</title>
        <authorList>
            <person name="Dehaven B.C."/>
            <person name="Gupta K."/>
            <person name="Isaacs S.N."/>
        </authorList>
    </citation>
    <scope>INTERACTION WITH A56</scope>
    <scope>SUBCELLULAR LOCATION</scope>
</reference>
<reference key="5">
    <citation type="journal article" date="2020" name="J. Virol.">
        <title>Mutations Near the N Terminus of Vaccinia Virus G9 Protein Overcome Restrictions on Cell Entry and Syncytium Formation Imposed by the A56/K2 Fusion Regulatory Complex.</title>
        <authorList>
            <person name="Cotter C.A."/>
            <person name="Moss B."/>
        </authorList>
    </citation>
    <scope>FUNCTION</scope>
</reference>
<reference key="6">
    <citation type="journal article" date="2015" name="J. Virol.">
        <title>Deciphering poxvirus gene expression by RNA sequencing and ribosome profiling.</title>
        <authorList>
            <person name="Yang Z."/>
            <person name="Cao S."/>
            <person name="Martens C.A."/>
            <person name="Porcella S.F."/>
            <person name="Xie Z."/>
            <person name="Ma M."/>
            <person name="Shen B."/>
            <person name="Moss B."/>
        </authorList>
    </citation>
    <scope>INDUCTION</scope>
</reference>
<sequence length="369" mass="42286">MIALLILSLTCSVSTYRLQGFTNAGIVAYKNIQDDNIVFSPFGYSFSMFMSLLPASGNTRIELLKTMDLRKRDLGPAFTELISGLAKLKTSKYTYTDLTYQSFVDNTVCIKPSYYQQYHRFGLYRLNFRRDAVNKINSIVERRSGMSNVVDSNMLDNNTLWAIINTIYFKGIWQYPFDITKTRNASFTNKYGTKTVPMMNVVTKLQGNTITIDDEEYDMVRLPYKDANISMYLAIGDNMTHFTDSITAAKLDYWSFQLGNKVYNLKLPKFSIENKRDIKSIAEMMAPSMFNPDNASFKHMTRDPLYIYKMFQNAKIDVDEQGTVAEASTIMVATARSSPEKLEFNTPFVFIIRHDITGFILFMGKVESP</sequence>